<organism>
    <name type="scientific">Pseudomonas syringae pv. syringae (strain B728a)</name>
    <dbReference type="NCBI Taxonomy" id="205918"/>
    <lineage>
        <taxon>Bacteria</taxon>
        <taxon>Pseudomonadati</taxon>
        <taxon>Pseudomonadota</taxon>
        <taxon>Gammaproteobacteria</taxon>
        <taxon>Pseudomonadales</taxon>
        <taxon>Pseudomonadaceae</taxon>
        <taxon>Pseudomonas</taxon>
        <taxon>Pseudomonas syringae</taxon>
    </lineage>
</organism>
<proteinExistence type="inferred from homology"/>
<evidence type="ECO:0000255" key="1">
    <source>
        <dbReference type="HAMAP-Rule" id="MF_00197"/>
    </source>
</evidence>
<sequence length="276" mass="30399">MLLRFTKMHGLGNDFMVLDLVSQHAHILPKHAKQWGDRHTGIGFDQLLLVEAPNNPDVDFRYRIFNSDGSEVEQCGNGARCFARFVLDKRLTAKKQIRVETKSGIIELDIRSDGQISVDMGPPRFVPEEIPFEAAEQATCYTVDVDGQHVDMAAVSMGNPHAVLRVDDINNAPVHELGPKIEHHPRFPARVNVGFLHVVDRQRAQLRVWERGAGETQACGTGACAAAVAAISQGWMDSPLLIDLPGGRLSIEWAGPGHSVMMTGPAVRVYEGQVRL</sequence>
<feature type="chain" id="PRO_1000011936" description="Diaminopimelate epimerase">
    <location>
        <begin position="1"/>
        <end position="276"/>
    </location>
</feature>
<feature type="active site" description="Proton donor" evidence="1">
    <location>
        <position position="75"/>
    </location>
</feature>
<feature type="active site" description="Proton acceptor" evidence="1">
    <location>
        <position position="219"/>
    </location>
</feature>
<feature type="binding site" evidence="1">
    <location>
        <position position="13"/>
    </location>
    <ligand>
        <name>substrate</name>
    </ligand>
</feature>
<feature type="binding site" evidence="1">
    <location>
        <position position="46"/>
    </location>
    <ligand>
        <name>substrate</name>
    </ligand>
</feature>
<feature type="binding site" evidence="1">
    <location>
        <position position="66"/>
    </location>
    <ligand>
        <name>substrate</name>
    </ligand>
</feature>
<feature type="binding site" evidence="1">
    <location>
        <begin position="76"/>
        <end position="77"/>
    </location>
    <ligand>
        <name>substrate</name>
    </ligand>
</feature>
<feature type="binding site" evidence="1">
    <location>
        <position position="159"/>
    </location>
    <ligand>
        <name>substrate</name>
    </ligand>
</feature>
<feature type="binding site" evidence="1">
    <location>
        <position position="192"/>
    </location>
    <ligand>
        <name>substrate</name>
    </ligand>
</feature>
<feature type="binding site" evidence="1">
    <location>
        <begin position="210"/>
        <end position="211"/>
    </location>
    <ligand>
        <name>substrate</name>
    </ligand>
</feature>
<feature type="binding site" evidence="1">
    <location>
        <begin position="220"/>
        <end position="221"/>
    </location>
    <ligand>
        <name>substrate</name>
    </ligand>
</feature>
<feature type="site" description="Could be important to modulate the pK values of the two catalytic cysteine residues" evidence="1">
    <location>
        <position position="161"/>
    </location>
</feature>
<feature type="site" description="Could be important to modulate the pK values of the two catalytic cysteine residues" evidence="1">
    <location>
        <position position="210"/>
    </location>
</feature>
<feature type="site" description="Important for dimerization" evidence="1">
    <location>
        <position position="270"/>
    </location>
</feature>
<comment type="function">
    <text evidence="1">Catalyzes the stereoinversion of LL-2,6-diaminopimelate (L,L-DAP) to meso-diaminopimelate (meso-DAP), a precursor of L-lysine and an essential component of the bacterial peptidoglycan.</text>
</comment>
<comment type="catalytic activity">
    <reaction evidence="1">
        <text>(2S,6S)-2,6-diaminopimelate = meso-2,6-diaminopimelate</text>
        <dbReference type="Rhea" id="RHEA:15393"/>
        <dbReference type="ChEBI" id="CHEBI:57609"/>
        <dbReference type="ChEBI" id="CHEBI:57791"/>
        <dbReference type="EC" id="5.1.1.7"/>
    </reaction>
</comment>
<comment type="pathway">
    <text evidence="1">Amino-acid biosynthesis; L-lysine biosynthesis via DAP pathway; DL-2,6-diaminopimelate from LL-2,6-diaminopimelate: step 1/1.</text>
</comment>
<comment type="subunit">
    <text evidence="1">Homodimer.</text>
</comment>
<comment type="subcellular location">
    <subcellularLocation>
        <location evidence="1">Cytoplasm</location>
    </subcellularLocation>
</comment>
<comment type="similarity">
    <text evidence="1">Belongs to the diaminopimelate epimerase family.</text>
</comment>
<accession>Q500B6</accession>
<gene>
    <name evidence="1" type="primary">dapF</name>
    <name type="ordered locus">Psyr_0183</name>
</gene>
<reference key="1">
    <citation type="journal article" date="2005" name="Proc. Natl. Acad. Sci. U.S.A.">
        <title>Comparison of the complete genome sequences of Pseudomonas syringae pv. syringae B728a and pv. tomato DC3000.</title>
        <authorList>
            <person name="Feil H."/>
            <person name="Feil W.S."/>
            <person name="Chain P."/>
            <person name="Larimer F."/>
            <person name="Dibartolo G."/>
            <person name="Copeland A."/>
            <person name="Lykidis A."/>
            <person name="Trong S."/>
            <person name="Nolan M."/>
            <person name="Goltsman E."/>
            <person name="Thiel J."/>
            <person name="Malfatti S."/>
            <person name="Loper J.E."/>
            <person name="Lapidus A."/>
            <person name="Detter J.C."/>
            <person name="Land M."/>
            <person name="Richardson P.M."/>
            <person name="Kyrpides N.C."/>
            <person name="Ivanova N."/>
            <person name="Lindow S.E."/>
        </authorList>
    </citation>
    <scope>NUCLEOTIDE SEQUENCE [LARGE SCALE GENOMIC DNA]</scope>
    <source>
        <strain>B728a</strain>
    </source>
</reference>
<protein>
    <recommendedName>
        <fullName evidence="1">Diaminopimelate epimerase</fullName>
        <shortName evidence="1">DAP epimerase</shortName>
        <ecNumber evidence="1">5.1.1.7</ecNumber>
    </recommendedName>
    <alternativeName>
        <fullName evidence="1">PLP-independent amino acid racemase</fullName>
    </alternativeName>
</protein>
<name>DAPF_PSEU2</name>
<keyword id="KW-0028">Amino-acid biosynthesis</keyword>
<keyword id="KW-0963">Cytoplasm</keyword>
<keyword id="KW-0413">Isomerase</keyword>
<keyword id="KW-0457">Lysine biosynthesis</keyword>
<dbReference type="EC" id="5.1.1.7" evidence="1"/>
<dbReference type="EMBL" id="CP000075">
    <property type="protein sequence ID" value="AAY35256.1"/>
    <property type="molecule type" value="Genomic_DNA"/>
</dbReference>
<dbReference type="RefSeq" id="WP_003401768.1">
    <property type="nucleotide sequence ID" value="NC_007005.1"/>
</dbReference>
<dbReference type="RefSeq" id="YP_233294.1">
    <property type="nucleotide sequence ID" value="NC_007005.1"/>
</dbReference>
<dbReference type="SMR" id="Q500B6"/>
<dbReference type="STRING" id="205918.Psyr_0183"/>
<dbReference type="KEGG" id="psb:Psyr_0183"/>
<dbReference type="PATRIC" id="fig|205918.7.peg.179"/>
<dbReference type="eggNOG" id="COG0253">
    <property type="taxonomic scope" value="Bacteria"/>
</dbReference>
<dbReference type="HOGENOM" id="CLU_053306_1_1_6"/>
<dbReference type="OrthoDB" id="9805408at2"/>
<dbReference type="UniPathway" id="UPA00034">
    <property type="reaction ID" value="UER00025"/>
</dbReference>
<dbReference type="Proteomes" id="UP000000426">
    <property type="component" value="Chromosome"/>
</dbReference>
<dbReference type="GO" id="GO:0005829">
    <property type="term" value="C:cytosol"/>
    <property type="evidence" value="ECO:0007669"/>
    <property type="project" value="TreeGrafter"/>
</dbReference>
<dbReference type="GO" id="GO:0008837">
    <property type="term" value="F:diaminopimelate epimerase activity"/>
    <property type="evidence" value="ECO:0007669"/>
    <property type="project" value="UniProtKB-UniRule"/>
</dbReference>
<dbReference type="GO" id="GO:0009089">
    <property type="term" value="P:lysine biosynthetic process via diaminopimelate"/>
    <property type="evidence" value="ECO:0007669"/>
    <property type="project" value="UniProtKB-UniRule"/>
</dbReference>
<dbReference type="FunFam" id="3.10.310.10:FF:000004">
    <property type="entry name" value="Diaminopimelate epimerase"/>
    <property type="match status" value="1"/>
</dbReference>
<dbReference type="Gene3D" id="3.10.310.10">
    <property type="entry name" value="Diaminopimelate Epimerase, Chain A, domain 1"/>
    <property type="match status" value="2"/>
</dbReference>
<dbReference type="HAMAP" id="MF_00197">
    <property type="entry name" value="DAP_epimerase"/>
    <property type="match status" value="1"/>
</dbReference>
<dbReference type="InterPro" id="IPR018510">
    <property type="entry name" value="DAP_epimerase_AS"/>
</dbReference>
<dbReference type="InterPro" id="IPR001653">
    <property type="entry name" value="DAP_epimerase_DapF"/>
</dbReference>
<dbReference type="NCBIfam" id="TIGR00652">
    <property type="entry name" value="DapF"/>
    <property type="match status" value="1"/>
</dbReference>
<dbReference type="PANTHER" id="PTHR31689:SF0">
    <property type="entry name" value="DIAMINOPIMELATE EPIMERASE"/>
    <property type="match status" value="1"/>
</dbReference>
<dbReference type="PANTHER" id="PTHR31689">
    <property type="entry name" value="DIAMINOPIMELATE EPIMERASE, CHLOROPLASTIC"/>
    <property type="match status" value="1"/>
</dbReference>
<dbReference type="Pfam" id="PF01678">
    <property type="entry name" value="DAP_epimerase"/>
    <property type="match status" value="2"/>
</dbReference>
<dbReference type="SUPFAM" id="SSF54506">
    <property type="entry name" value="Diaminopimelate epimerase-like"/>
    <property type="match status" value="1"/>
</dbReference>
<dbReference type="PROSITE" id="PS01326">
    <property type="entry name" value="DAP_EPIMERASE"/>
    <property type="match status" value="1"/>
</dbReference>